<name>PRODH_DEIRA</name>
<accession>Q9RW55</accession>
<reference evidence="5 7" key="1">
    <citation type="journal article" date="1999" name="Science">
        <title>Genome sequence of the radioresistant bacterium Deinococcus radiodurans R1.</title>
        <authorList>
            <person name="White O."/>
            <person name="Eisen J.A."/>
            <person name="Heidelberg J.F."/>
            <person name="Hickey E.K."/>
            <person name="Peterson J.D."/>
            <person name="Dodson R.J."/>
            <person name="Haft D.H."/>
            <person name="Gwinn M.L."/>
            <person name="Nelson W.C."/>
            <person name="Richardson D.L."/>
            <person name="Moffat K.S."/>
            <person name="Qin H."/>
            <person name="Jiang L."/>
            <person name="Pamphile W."/>
            <person name="Crosby M."/>
            <person name="Shen M."/>
            <person name="Vamathevan J.J."/>
            <person name="Lam P."/>
            <person name="McDonald L.A."/>
            <person name="Utterback T.R."/>
            <person name="Zalewski C."/>
            <person name="Makarova K.S."/>
            <person name="Aravind L."/>
            <person name="Daly M.J."/>
            <person name="Minton K.W."/>
            <person name="Fleischmann R.D."/>
            <person name="Ketchum K.A."/>
            <person name="Nelson K.E."/>
            <person name="Salzberg S.L."/>
            <person name="Smith H.O."/>
            <person name="Venter J.C."/>
            <person name="Fraser C.M."/>
        </authorList>
    </citation>
    <scope>NUCLEOTIDE SEQUENCE [LARGE SCALE GENOMIC DNA]</scope>
    <source>
        <strain evidence="7">ATCC 13939 / DSM 20539 / JCM 16871 / CCUG 27074 / LMG 4051 / NBRC 15346 / NCIMB 9279 / VKM B-1422 / R1</strain>
    </source>
</reference>
<reference key="2">
    <citation type="journal article" date="2016" name="Genome Announc.">
        <title>Improved Complete Genome Sequence of the Extremely Radioresistant Bacterium Deinococcus radiodurans R1 Obtained Using PacBio Single-Molecule Sequencing.</title>
        <authorList>
            <person name="Hua X."/>
            <person name="Hua Y."/>
        </authorList>
    </citation>
    <scope>NUCLEOTIDE SEQUENCE [LARGE SCALE GENOMIC DNA]</scope>
    <source>
        <strain evidence="6">ATCC 13939 / DSM 20539 / JCM 16871 / CCUG 27074 / LMG 4051 / NBRC 15346 / NCIMB 9279 / VKM B-1422 / R1</strain>
    </source>
</reference>
<reference evidence="8 9" key="3">
    <citation type="journal article" date="2012" name="Biochemistry">
        <title>Crystal structures and kinetics of monofunctional proline dehydrogenase provide insight into substrate recognition and conformational changes associated with flavin reduction and product release.</title>
        <authorList>
            <person name="Luo M."/>
            <person name="Arentson B.W."/>
            <person name="Srivastava D."/>
            <person name="Becker D.F."/>
            <person name="Tanner J.J."/>
        </authorList>
    </citation>
    <scope>X-RAY CRYSTALLOGRAPHY (1.36 ANGSTROMS) IN COMPLEXES WITH FAD AND SUBSTRATE ANALOG</scope>
    <scope>FUNCTION</scope>
    <scope>CATALYTIC ACTIVITY</scope>
    <scope>BIOPHYSICOCHEMICAL PROPERTIES</scope>
    <scope>MUTAGENESIS OF GLY-63 AND GLU-64</scope>
</reference>
<gene>
    <name evidence="5" type="ordered locus">DR_0814</name>
    <name evidence="6" type="ORF">A2G07_09440</name>
</gene>
<organism evidence="5">
    <name type="scientific">Deinococcus radiodurans (strain ATCC 13939 / DSM 20539 / JCM 16871 / CCUG 27074 / LMG 4051 / NBRC 15346 / NCIMB 9279 / VKM B-1422 / R1)</name>
    <dbReference type="NCBI Taxonomy" id="243230"/>
    <lineage>
        <taxon>Bacteria</taxon>
        <taxon>Thermotogati</taxon>
        <taxon>Deinococcota</taxon>
        <taxon>Deinococci</taxon>
        <taxon>Deinococcales</taxon>
        <taxon>Deinococcaceae</taxon>
        <taxon>Deinococcus</taxon>
    </lineage>
</organism>
<dbReference type="EC" id="1.5.5.2" evidence="2"/>
<dbReference type="EMBL" id="AE000513">
    <property type="protein sequence ID" value="AAF10393.1"/>
    <property type="molecule type" value="Genomic_DNA"/>
</dbReference>
<dbReference type="EMBL" id="CP015081">
    <property type="protein sequence ID" value="ANC71972.1"/>
    <property type="molecule type" value="Genomic_DNA"/>
</dbReference>
<dbReference type="PIR" id="D75471">
    <property type="entry name" value="D75471"/>
</dbReference>
<dbReference type="RefSeq" id="NP_294538.1">
    <property type="nucleotide sequence ID" value="NC_001263.1"/>
</dbReference>
<dbReference type="RefSeq" id="WP_010887460.1">
    <property type="nucleotide sequence ID" value="NC_001263.1"/>
</dbReference>
<dbReference type="PDB" id="4H6Q">
    <property type="method" value="X-ray"/>
    <property type="resolution" value="1.36 A"/>
    <property type="chains" value="A/C=1-310"/>
</dbReference>
<dbReference type="PDB" id="4H6R">
    <property type="method" value="X-ray"/>
    <property type="resolution" value="1.75 A"/>
    <property type="chains" value="A/C=1-310"/>
</dbReference>
<dbReference type="PDBsum" id="4H6Q"/>
<dbReference type="PDBsum" id="4H6R"/>
<dbReference type="SMR" id="Q9RW55"/>
<dbReference type="FunCoup" id="Q9RW55">
    <property type="interactions" value="40"/>
</dbReference>
<dbReference type="STRING" id="243230.DR_0814"/>
<dbReference type="PaxDb" id="243230-DR_0814"/>
<dbReference type="EnsemblBacteria" id="AAF10393">
    <property type="protein sequence ID" value="AAF10393"/>
    <property type="gene ID" value="DR_0814"/>
</dbReference>
<dbReference type="GeneID" id="69517058"/>
<dbReference type="KEGG" id="dra:DR_0814"/>
<dbReference type="PATRIC" id="fig|243230.17.peg.995"/>
<dbReference type="eggNOG" id="COG0506">
    <property type="taxonomic scope" value="Bacteria"/>
</dbReference>
<dbReference type="HOGENOM" id="CLU_061158_0_0_0"/>
<dbReference type="InParanoid" id="Q9RW55"/>
<dbReference type="OrthoDB" id="9773461at2"/>
<dbReference type="BRENDA" id="1.5.99.B2">
    <property type="organism ID" value="1856"/>
</dbReference>
<dbReference type="UniPathway" id="UPA00261">
    <property type="reaction ID" value="UER00373"/>
</dbReference>
<dbReference type="EvolutionaryTrace" id="Q9RW55"/>
<dbReference type="Proteomes" id="UP000002524">
    <property type="component" value="Chromosome 1"/>
</dbReference>
<dbReference type="GO" id="GO:0071949">
    <property type="term" value="F:FAD binding"/>
    <property type="evidence" value="ECO:0000314"/>
    <property type="project" value="UniProtKB"/>
</dbReference>
<dbReference type="GO" id="GO:0004657">
    <property type="term" value="F:proline dehydrogenase activity"/>
    <property type="evidence" value="ECO:0000314"/>
    <property type="project" value="UniProtKB"/>
</dbReference>
<dbReference type="GO" id="GO:0006562">
    <property type="term" value="P:proline catabolic process"/>
    <property type="evidence" value="ECO:0000314"/>
    <property type="project" value="UniProtKB"/>
</dbReference>
<dbReference type="GO" id="GO:0010133">
    <property type="term" value="P:proline catabolic process to glutamate"/>
    <property type="evidence" value="ECO:0007669"/>
    <property type="project" value="UniProtKB-UniPathway"/>
</dbReference>
<dbReference type="Gene3D" id="3.20.20.220">
    <property type="match status" value="1"/>
</dbReference>
<dbReference type="InterPro" id="IPR029041">
    <property type="entry name" value="FAD-linked_oxidoreductase-like"/>
</dbReference>
<dbReference type="InterPro" id="IPR008219">
    <property type="entry name" value="PRODH_bac_arc"/>
</dbReference>
<dbReference type="InterPro" id="IPR002872">
    <property type="entry name" value="Proline_DH_dom"/>
</dbReference>
<dbReference type="InterPro" id="IPR015659">
    <property type="entry name" value="Proline_oxidase"/>
</dbReference>
<dbReference type="PANTHER" id="PTHR13914:SF0">
    <property type="entry name" value="PROLINE DEHYDROGENASE 1, MITOCHONDRIAL"/>
    <property type="match status" value="1"/>
</dbReference>
<dbReference type="PANTHER" id="PTHR13914">
    <property type="entry name" value="PROLINE OXIDASE"/>
    <property type="match status" value="1"/>
</dbReference>
<dbReference type="Pfam" id="PF01619">
    <property type="entry name" value="Pro_dh"/>
    <property type="match status" value="1"/>
</dbReference>
<dbReference type="PIRSF" id="PIRSF000196">
    <property type="entry name" value="Pro_dehydrog"/>
    <property type="match status" value="1"/>
</dbReference>
<dbReference type="SUPFAM" id="SSF51730">
    <property type="entry name" value="FAD-linked oxidoreductase"/>
    <property type="match status" value="1"/>
</dbReference>
<evidence type="ECO:0000250" key="1">
    <source>
        <dbReference type="UniProtKB" id="Q72IB8"/>
    </source>
</evidence>
<evidence type="ECO:0000269" key="2">
    <source>
    </source>
</evidence>
<evidence type="ECO:0000303" key="3">
    <source>
    </source>
</evidence>
<evidence type="ECO:0000305" key="4"/>
<evidence type="ECO:0000312" key="5">
    <source>
        <dbReference type="EMBL" id="AAF10393.1"/>
    </source>
</evidence>
<evidence type="ECO:0000312" key="6">
    <source>
        <dbReference type="EMBL" id="ANC71972.1"/>
    </source>
</evidence>
<evidence type="ECO:0000312" key="7">
    <source>
        <dbReference type="Proteomes" id="UP000002524"/>
    </source>
</evidence>
<evidence type="ECO:0007744" key="8">
    <source>
        <dbReference type="PDB" id="4H6Q"/>
    </source>
</evidence>
<evidence type="ECO:0007744" key="9">
    <source>
        <dbReference type="PDB" id="4H6R"/>
    </source>
</evidence>
<evidence type="ECO:0007829" key="10">
    <source>
        <dbReference type="PDB" id="4H6Q"/>
    </source>
</evidence>
<feature type="chain" id="PRO_0000436838" description="Proline dehydrogenase">
    <location>
        <begin position="1"/>
        <end position="310"/>
    </location>
</feature>
<feature type="active site" evidence="1">
    <location>
        <position position="135"/>
    </location>
</feature>
<feature type="active site" evidence="1">
    <location>
        <position position="187"/>
    </location>
</feature>
<feature type="binding site" evidence="2 8">
    <location>
        <position position="98"/>
    </location>
    <ligand>
        <name>substrate</name>
    </ligand>
</feature>
<feature type="binding site" evidence="2 8">
    <location>
        <position position="136"/>
    </location>
    <ligand>
        <name>FAD</name>
        <dbReference type="ChEBI" id="CHEBI:57692"/>
    </ligand>
</feature>
<feature type="binding site" evidence="2 8">
    <location>
        <position position="166"/>
    </location>
    <ligand>
        <name>FAD</name>
        <dbReference type="ChEBI" id="CHEBI:57692"/>
    </ligand>
</feature>
<feature type="binding site" evidence="2 8">
    <location>
        <begin position="187"/>
        <end position="192"/>
    </location>
    <ligand>
        <name>FAD</name>
        <dbReference type="ChEBI" id="CHEBI:57692"/>
    </ligand>
</feature>
<feature type="binding site" evidence="2 8">
    <location>
        <begin position="229"/>
        <end position="230"/>
    </location>
    <ligand>
        <name>FAD</name>
        <dbReference type="ChEBI" id="CHEBI:57692"/>
    </ligand>
</feature>
<feature type="binding site" evidence="2 8">
    <location>
        <begin position="291"/>
        <end position="292"/>
    </location>
    <ligand>
        <name>substrate</name>
    </ligand>
</feature>
<feature type="binding site" evidence="2 8">
    <location>
        <begin position="292"/>
        <end position="295"/>
    </location>
    <ligand>
        <name>FAD</name>
        <dbReference type="ChEBI" id="CHEBI:57692"/>
    </ligand>
</feature>
<feature type="site" description="Critical for catalytic activity" evidence="1">
    <location>
        <position position="278"/>
    </location>
</feature>
<feature type="mutagenesis site" description="140-fold decrease in catalytic efficiency for proline." evidence="2">
    <original>G</original>
    <variation>A</variation>
    <location>
        <position position="63"/>
    </location>
</feature>
<feature type="mutagenesis site" description="27-fold decrease in catalytic efficiency for proline." evidence="2">
    <original>E</original>
    <variation>A</variation>
    <location>
        <position position="64"/>
    </location>
</feature>
<feature type="helix" evidence="10">
    <location>
        <begin position="18"/>
        <end position="20"/>
    </location>
</feature>
<feature type="helix" evidence="10">
    <location>
        <begin position="21"/>
        <end position="31"/>
    </location>
</feature>
<feature type="turn" evidence="10">
    <location>
        <begin position="32"/>
        <end position="34"/>
    </location>
</feature>
<feature type="helix" evidence="10">
    <location>
        <begin position="40"/>
        <end position="52"/>
    </location>
</feature>
<feature type="strand" evidence="10">
    <location>
        <begin position="56"/>
        <end position="61"/>
    </location>
</feature>
<feature type="helix" evidence="10">
    <location>
        <begin position="69"/>
        <end position="88"/>
    </location>
</feature>
<feature type="strand" evidence="10">
    <location>
        <begin position="94"/>
        <end position="97"/>
    </location>
</feature>
<feature type="helix" evidence="10">
    <location>
        <begin position="99"/>
        <end position="101"/>
    </location>
</feature>
<feature type="turn" evidence="10">
    <location>
        <begin position="102"/>
        <end position="105"/>
    </location>
</feature>
<feature type="helix" evidence="10">
    <location>
        <begin position="113"/>
        <end position="127"/>
    </location>
</feature>
<feature type="strand" evidence="10">
    <location>
        <begin position="131"/>
        <end position="134"/>
    </location>
</feature>
<feature type="helix" evidence="10">
    <location>
        <begin position="139"/>
        <end position="141"/>
    </location>
</feature>
<feature type="helix" evidence="10">
    <location>
        <begin position="142"/>
        <end position="156"/>
    </location>
</feature>
<feature type="turn" evidence="10">
    <location>
        <begin position="158"/>
        <end position="160"/>
    </location>
</feature>
<feature type="strand" evidence="10">
    <location>
        <begin position="161"/>
        <end position="166"/>
    </location>
</feature>
<feature type="helix" evidence="10">
    <location>
        <begin position="172"/>
        <end position="178"/>
    </location>
</feature>
<feature type="helix" evidence="10">
    <location>
        <begin position="179"/>
        <end position="182"/>
    </location>
</feature>
<feature type="strand" evidence="10">
    <location>
        <begin position="186"/>
        <end position="189"/>
    </location>
</feature>
<feature type="turn" evidence="10">
    <location>
        <begin position="197"/>
        <end position="199"/>
    </location>
</feature>
<feature type="helix" evidence="10">
    <location>
        <begin position="204"/>
        <end position="220"/>
    </location>
</feature>
<feature type="strand" evidence="10">
    <location>
        <begin position="225"/>
        <end position="228"/>
    </location>
</feature>
<feature type="helix" evidence="10">
    <location>
        <begin position="232"/>
        <end position="244"/>
    </location>
</feature>
<feature type="strand" evidence="10">
    <location>
        <begin position="251"/>
        <end position="257"/>
    </location>
</feature>
<feature type="helix" evidence="10">
    <location>
        <begin position="262"/>
        <end position="270"/>
    </location>
</feature>
<feature type="strand" evidence="10">
    <location>
        <begin position="275"/>
        <end position="283"/>
    </location>
</feature>
<feature type="helix" evidence="10">
    <location>
        <begin position="286"/>
        <end position="294"/>
    </location>
</feature>
<keyword id="KW-0002">3D-structure</keyword>
<keyword id="KW-0274">FAD</keyword>
<keyword id="KW-0285">Flavoprotein</keyword>
<keyword id="KW-0547">Nucleotide-binding</keyword>
<keyword id="KW-0560">Oxidoreductase</keyword>
<keyword id="KW-0642">Proline metabolism</keyword>
<keyword id="KW-1185">Reference proteome</keyword>
<protein>
    <recommendedName>
        <fullName evidence="3 5">Proline dehydrogenase</fullName>
        <shortName evidence="3">PRODH</shortName>
        <ecNumber evidence="2">1.5.5.2</ecNumber>
    </recommendedName>
    <alternativeName>
        <fullName evidence="3">DrPRODH</fullName>
    </alternativeName>
    <alternativeName>
        <fullName evidence="4">Proline oxidase</fullName>
    </alternativeName>
</protein>
<comment type="function">
    <text evidence="2">Converts proline to delta-1-pyrroline-5-carboxylate.</text>
</comment>
<comment type="catalytic activity">
    <reaction evidence="2">
        <text>L-proline + a quinone = (S)-1-pyrroline-5-carboxylate + a quinol + H(+)</text>
        <dbReference type="Rhea" id="RHEA:23784"/>
        <dbReference type="ChEBI" id="CHEBI:15378"/>
        <dbReference type="ChEBI" id="CHEBI:17388"/>
        <dbReference type="ChEBI" id="CHEBI:24646"/>
        <dbReference type="ChEBI" id="CHEBI:60039"/>
        <dbReference type="ChEBI" id="CHEBI:132124"/>
        <dbReference type="EC" id="1.5.5.2"/>
    </reaction>
</comment>
<comment type="cofactor">
    <cofactor evidence="2">
        <name>FAD</name>
        <dbReference type="ChEBI" id="CHEBI:57692"/>
    </cofactor>
</comment>
<comment type="biophysicochemical properties">
    <kinetics>
        <KM evidence="2">290 mM for proline (at 23 degrees Celsius and pH 7.5)</KM>
        <KM evidence="2">0.155 mM for coenzyme Q1 (at 23 degrees Celsius and pH 7.5)</KM>
        <text evidence="2">kcat 8.7 sec(-1) is for proline. kcat is 14 sec(-1) for coenzyme Q1.</text>
    </kinetics>
</comment>
<comment type="pathway">
    <text evidence="4">Amino-acid degradation; L-proline degradation into L-glutamate; L-glutamate from L-proline: step 1/2.</text>
</comment>
<comment type="similarity">
    <text evidence="4">Belongs to the proline dehydrogenase family.</text>
</comment>
<sequence>MIDQLYRKAVLTVAERPQVEQLARQKMWNLAERFVAGESIESAIQAVQALERDGIAGNLDLLGEFIDSPAKCTEFADDVIKLIEAAHAAGIKPYVSIKLSSVGQGKDENGEDLGLTNARRIIAKAKEYGGFICLDMEDHTRVDVTLEQFRTLVGEFGAEHVGTVLQSYLYRSLGDRASLDDLRPNIRMVKGAYLEPATVAYPDKADVDQNYRRLVFQHLKAGNYTNVATHDERIIDDVKRFVLAHGIGKDAFEFQMLYGIRRDLQKQLAAEGYRVRVYLPYGRDWYAYFSRRIAETPRNAAFVVQGMLKG</sequence>
<proteinExistence type="evidence at protein level"/>